<reference key="1">
    <citation type="journal article" date="2005" name="Nature">
        <title>The genome of the social amoeba Dictyostelium discoideum.</title>
        <authorList>
            <person name="Eichinger L."/>
            <person name="Pachebat J.A."/>
            <person name="Gloeckner G."/>
            <person name="Rajandream M.A."/>
            <person name="Sucgang R."/>
            <person name="Berriman M."/>
            <person name="Song J."/>
            <person name="Olsen R."/>
            <person name="Szafranski K."/>
            <person name="Xu Q."/>
            <person name="Tunggal B."/>
            <person name="Kummerfeld S."/>
            <person name="Madera M."/>
            <person name="Konfortov B.A."/>
            <person name="Rivero F."/>
            <person name="Bankier A.T."/>
            <person name="Lehmann R."/>
            <person name="Hamlin N."/>
            <person name="Davies R."/>
            <person name="Gaudet P."/>
            <person name="Fey P."/>
            <person name="Pilcher K."/>
            <person name="Chen G."/>
            <person name="Saunders D."/>
            <person name="Sodergren E.J."/>
            <person name="Davis P."/>
            <person name="Kerhornou A."/>
            <person name="Nie X."/>
            <person name="Hall N."/>
            <person name="Anjard C."/>
            <person name="Hemphill L."/>
            <person name="Bason N."/>
            <person name="Farbrother P."/>
            <person name="Desany B."/>
            <person name="Just E."/>
            <person name="Morio T."/>
            <person name="Rost R."/>
            <person name="Churcher C.M."/>
            <person name="Cooper J."/>
            <person name="Haydock S."/>
            <person name="van Driessche N."/>
            <person name="Cronin A."/>
            <person name="Goodhead I."/>
            <person name="Muzny D.M."/>
            <person name="Mourier T."/>
            <person name="Pain A."/>
            <person name="Lu M."/>
            <person name="Harper D."/>
            <person name="Lindsay R."/>
            <person name="Hauser H."/>
            <person name="James K.D."/>
            <person name="Quiles M."/>
            <person name="Madan Babu M."/>
            <person name="Saito T."/>
            <person name="Buchrieser C."/>
            <person name="Wardroper A."/>
            <person name="Felder M."/>
            <person name="Thangavelu M."/>
            <person name="Johnson D."/>
            <person name="Knights A."/>
            <person name="Loulseged H."/>
            <person name="Mungall K.L."/>
            <person name="Oliver K."/>
            <person name="Price C."/>
            <person name="Quail M.A."/>
            <person name="Urushihara H."/>
            <person name="Hernandez J."/>
            <person name="Rabbinowitsch E."/>
            <person name="Steffen D."/>
            <person name="Sanders M."/>
            <person name="Ma J."/>
            <person name="Kohara Y."/>
            <person name="Sharp S."/>
            <person name="Simmonds M.N."/>
            <person name="Spiegler S."/>
            <person name="Tivey A."/>
            <person name="Sugano S."/>
            <person name="White B."/>
            <person name="Walker D."/>
            <person name="Woodward J.R."/>
            <person name="Winckler T."/>
            <person name="Tanaka Y."/>
            <person name="Shaulsky G."/>
            <person name="Schleicher M."/>
            <person name="Weinstock G.M."/>
            <person name="Rosenthal A."/>
            <person name="Cox E.C."/>
            <person name="Chisholm R.L."/>
            <person name="Gibbs R.A."/>
            <person name="Loomis W.F."/>
            <person name="Platzer M."/>
            <person name="Kay R.R."/>
            <person name="Williams J.G."/>
            <person name="Dear P.H."/>
            <person name="Noegel A.A."/>
            <person name="Barrell B.G."/>
            <person name="Kuspa A."/>
        </authorList>
    </citation>
    <scope>NUCLEOTIDE SEQUENCE [LARGE SCALE GENOMIC DNA]</scope>
    <source>
        <strain>AX4</strain>
    </source>
</reference>
<protein>
    <recommendedName>
        <fullName>Putative actin-28</fullName>
        <ecNumber evidence="2">3.6.4.-</ecNumber>
    </recommendedName>
</protein>
<sequence length="353" mass="39323">MEINVQAIVIDNGSDTCKAGFVGEEAPRSEFPSIVGIDQNDKDSYVGNEAQSKRGILTLKYPIERGIITNWDDMEKIWHHAFYNELGVAPEENIVVLSESPLNPEENREKMAQIMFETFKTPAIYVENQAVFSIYNSGRMTGIVLDSGDSASHVVPVYEGLALPLATSSLGFAGCDLTDQMSLLLNDLGYNLEREIVRDIKEKLSYVSSDFLWEIDDPSLEKSYELPDGQVITIGKELLACSEGLFLPYVFFGTNLDGIDKAIYNSIMKCDVDIHNDLYGNVVLSGGSTMFPGIEYRMYKELTQLAPSTTEIVINAPPERKNSVWIGGSILGLVPNFPELCFDKEDYDEYGRL</sequence>
<keyword id="KW-0067">ATP-binding</keyword>
<keyword id="KW-0963">Cytoplasm</keyword>
<keyword id="KW-0206">Cytoskeleton</keyword>
<keyword id="KW-0378">Hydrolase</keyword>
<keyword id="KW-0547">Nucleotide-binding</keyword>
<keyword id="KW-1185">Reference proteome</keyword>
<feature type="chain" id="PRO_0000312678" description="Putative actin-28">
    <location>
        <begin position="1"/>
        <end position="353"/>
    </location>
</feature>
<name>ACT28_DICDI</name>
<evidence type="ECO:0000250" key="1"/>
<evidence type="ECO:0000250" key="2">
    <source>
        <dbReference type="UniProtKB" id="P68137"/>
    </source>
</evidence>
<evidence type="ECO:0000305" key="3"/>
<accession>Q54HE7</accession>
<organism>
    <name type="scientific">Dictyostelium discoideum</name>
    <name type="common">Social amoeba</name>
    <dbReference type="NCBI Taxonomy" id="44689"/>
    <lineage>
        <taxon>Eukaryota</taxon>
        <taxon>Amoebozoa</taxon>
        <taxon>Evosea</taxon>
        <taxon>Eumycetozoa</taxon>
        <taxon>Dictyostelia</taxon>
        <taxon>Dictyosteliales</taxon>
        <taxon>Dictyosteliaceae</taxon>
        <taxon>Dictyostelium</taxon>
    </lineage>
</organism>
<dbReference type="EC" id="3.6.4.-" evidence="2"/>
<dbReference type="EMBL" id="AAFI02000141">
    <property type="protein sequence ID" value="EAL62687.1"/>
    <property type="molecule type" value="Genomic_DNA"/>
</dbReference>
<dbReference type="RefSeq" id="XP_636191.1">
    <property type="nucleotide sequence ID" value="XM_631099.1"/>
</dbReference>
<dbReference type="SMR" id="Q54HE7"/>
<dbReference type="FunCoup" id="Q54HE7">
    <property type="interactions" value="8"/>
</dbReference>
<dbReference type="STRING" id="44689.Q54HE7"/>
<dbReference type="PaxDb" id="44689-DDB0229354"/>
<dbReference type="EnsemblProtists" id="EAL62687">
    <property type="protein sequence ID" value="EAL62687"/>
    <property type="gene ID" value="DDB_G0289511"/>
</dbReference>
<dbReference type="GeneID" id="8627178"/>
<dbReference type="KEGG" id="ddi:DDB_G0289511"/>
<dbReference type="dictyBase" id="DDB_G0289511">
    <property type="gene designation" value="act28"/>
</dbReference>
<dbReference type="VEuPathDB" id="AmoebaDB:DDB_G0289511"/>
<dbReference type="eggNOG" id="KOG0676">
    <property type="taxonomic scope" value="Eukaryota"/>
</dbReference>
<dbReference type="HOGENOM" id="CLU_027965_0_2_1"/>
<dbReference type="InParanoid" id="Q54HE7"/>
<dbReference type="PhylomeDB" id="Q54HE7"/>
<dbReference type="PRO" id="PR:Q54HE7"/>
<dbReference type="Proteomes" id="UP000002195">
    <property type="component" value="Chromosome 5"/>
</dbReference>
<dbReference type="GO" id="GO:0015629">
    <property type="term" value="C:actin cytoskeleton"/>
    <property type="evidence" value="ECO:0000250"/>
    <property type="project" value="dictyBase"/>
</dbReference>
<dbReference type="GO" id="GO:0005737">
    <property type="term" value="C:cytoplasm"/>
    <property type="evidence" value="ECO:0007669"/>
    <property type="project" value="UniProtKB-KW"/>
</dbReference>
<dbReference type="GO" id="GO:0005524">
    <property type="term" value="F:ATP binding"/>
    <property type="evidence" value="ECO:0007669"/>
    <property type="project" value="UniProtKB-KW"/>
</dbReference>
<dbReference type="GO" id="GO:0016787">
    <property type="term" value="F:hydrolase activity"/>
    <property type="evidence" value="ECO:0007669"/>
    <property type="project" value="UniProtKB-KW"/>
</dbReference>
<dbReference type="GO" id="GO:0017022">
    <property type="term" value="F:myosin binding"/>
    <property type="evidence" value="ECO:0000250"/>
    <property type="project" value="dictyBase"/>
</dbReference>
<dbReference type="GO" id="GO:0008976">
    <property type="term" value="F:polyphosphate kinase activity"/>
    <property type="evidence" value="ECO:0000314"/>
    <property type="project" value="dictyBase"/>
</dbReference>
<dbReference type="GO" id="GO:0005200">
    <property type="term" value="F:structural constituent of cytoskeleton"/>
    <property type="evidence" value="ECO:0000250"/>
    <property type="project" value="dictyBase"/>
</dbReference>
<dbReference type="GO" id="GO:0006909">
    <property type="term" value="P:phagocytosis"/>
    <property type="evidence" value="ECO:0000250"/>
    <property type="project" value="dictyBase"/>
</dbReference>
<dbReference type="FunFam" id="3.30.420.40:FF:000218">
    <property type="entry name" value="actin, alpha sarcomeric/skeletal-like"/>
    <property type="match status" value="1"/>
</dbReference>
<dbReference type="FunFam" id="3.30.420.40:FF:000148">
    <property type="entry name" value="Actin, alpha skeletal muscle"/>
    <property type="match status" value="1"/>
</dbReference>
<dbReference type="Gene3D" id="3.30.420.40">
    <property type="match status" value="2"/>
</dbReference>
<dbReference type="Gene3D" id="3.90.640.10">
    <property type="entry name" value="Actin, Chain A, domain 4"/>
    <property type="match status" value="1"/>
</dbReference>
<dbReference type="InterPro" id="IPR004000">
    <property type="entry name" value="Actin"/>
</dbReference>
<dbReference type="InterPro" id="IPR043129">
    <property type="entry name" value="ATPase_NBD"/>
</dbReference>
<dbReference type="PANTHER" id="PTHR11937">
    <property type="entry name" value="ACTIN"/>
    <property type="match status" value="1"/>
</dbReference>
<dbReference type="Pfam" id="PF00022">
    <property type="entry name" value="Actin"/>
    <property type="match status" value="2"/>
</dbReference>
<dbReference type="PRINTS" id="PR00190">
    <property type="entry name" value="ACTIN"/>
</dbReference>
<dbReference type="SMART" id="SM00268">
    <property type="entry name" value="ACTIN"/>
    <property type="match status" value="1"/>
</dbReference>
<dbReference type="SUPFAM" id="SSF53067">
    <property type="entry name" value="Actin-like ATPase domain"/>
    <property type="match status" value="2"/>
</dbReference>
<proteinExistence type="inferred from homology"/>
<gene>
    <name type="primary">act28</name>
    <name type="ORF">DDB_G0289511</name>
</gene>
<comment type="function">
    <text evidence="1">Actins are highly conserved proteins that are involved in various types of cell motility and are ubiquitously expressed in all eukaryotic cells. Multiple isoforms are involved in various cellular functions such as cytoskeleton structure, cell mobility, chromosome movement and muscle contraction (By similarity).</text>
</comment>
<comment type="catalytic activity">
    <reaction evidence="2">
        <text>ATP + H2O = ADP + phosphate + H(+)</text>
        <dbReference type="Rhea" id="RHEA:13065"/>
        <dbReference type="ChEBI" id="CHEBI:15377"/>
        <dbReference type="ChEBI" id="CHEBI:15378"/>
        <dbReference type="ChEBI" id="CHEBI:30616"/>
        <dbReference type="ChEBI" id="CHEBI:43474"/>
        <dbReference type="ChEBI" id="CHEBI:456216"/>
    </reaction>
</comment>
<comment type="subcellular location">
    <subcellularLocation>
        <location evidence="1">Cytoplasm</location>
        <location evidence="1">Cytoskeleton</location>
    </subcellularLocation>
</comment>
<comment type="similarity">
    <text evidence="3">Belongs to the actin family.</text>
</comment>